<evidence type="ECO:0000255" key="1">
    <source>
        <dbReference type="HAMAP-Rule" id="MF_01572"/>
    </source>
</evidence>
<reference key="1">
    <citation type="journal article" date="2001" name="Science">
        <title>Complete genome sequence of a virulent isolate of Streptococcus pneumoniae.</title>
        <authorList>
            <person name="Tettelin H."/>
            <person name="Nelson K.E."/>
            <person name="Paulsen I.T."/>
            <person name="Eisen J.A."/>
            <person name="Read T.D."/>
            <person name="Peterson S.N."/>
            <person name="Heidelberg J.F."/>
            <person name="DeBoy R.T."/>
            <person name="Haft D.H."/>
            <person name="Dodson R.J."/>
            <person name="Durkin A.S."/>
            <person name="Gwinn M.L."/>
            <person name="Kolonay J.F."/>
            <person name="Nelson W.C."/>
            <person name="Peterson J.D."/>
            <person name="Umayam L.A."/>
            <person name="White O."/>
            <person name="Salzberg S.L."/>
            <person name="Lewis M.R."/>
            <person name="Radune D."/>
            <person name="Holtzapple E.K."/>
            <person name="Khouri H.M."/>
            <person name="Wolf A.M."/>
            <person name="Utterback T.R."/>
            <person name="Hansen C.L."/>
            <person name="McDonald L.A."/>
            <person name="Feldblyum T.V."/>
            <person name="Angiuoli S.V."/>
            <person name="Dickinson T."/>
            <person name="Hickey E.K."/>
            <person name="Holt I.E."/>
            <person name="Loftus B.J."/>
            <person name="Yang F."/>
            <person name="Smith H.O."/>
            <person name="Venter J.C."/>
            <person name="Dougherty B.A."/>
            <person name="Morrison D.A."/>
            <person name="Hollingshead S.K."/>
            <person name="Fraser C.M."/>
        </authorList>
    </citation>
    <scope>NUCLEOTIDE SEQUENCE [LARGE SCALE GENOMIC DNA]</scope>
    <source>
        <strain>ATCC BAA-334 / TIGR4</strain>
    </source>
</reference>
<comment type="interaction">
    <interactant intactId="EBI-6474861">
        <id>Q97SA4</id>
    </interactant>
    <interactant intactId="EBI-6474857">
        <id>Q97RW5</id>
        <label>miaA</label>
    </interactant>
    <organismsDiffer>false</organismsDiffer>
    <experiments>3</experiments>
</comment>
<comment type="subcellular location">
    <subcellularLocation>
        <location evidence="1">Cell membrane</location>
        <topology evidence="1">Multi-pass membrane protein</topology>
    </subcellularLocation>
</comment>
<comment type="similarity">
    <text evidence="1">Belongs to the UPF0397 family.</text>
</comment>
<sequence length="182" mass="19343">MEIKFTIKQVVAVGIGAALFVVIGMINIPTPVPNTSIQLQYAVQALLSIIFGPIIGLLVGLIGHAIKDSLVGYGLWWTWIIASGLFGLVVGLFRKYVRVINGVFDWKDILIFNLIQLLANALVWGVLAPLGDVVIYQEAAEKVFAQGIVAGIANGVSVAIAGTLLLLAYAGTQTRAGSLKKD</sequence>
<name>Y482_STRPN</name>
<accession>Q97SA4</accession>
<organism>
    <name type="scientific">Streptococcus pneumoniae serotype 4 (strain ATCC BAA-334 / TIGR4)</name>
    <dbReference type="NCBI Taxonomy" id="170187"/>
    <lineage>
        <taxon>Bacteria</taxon>
        <taxon>Bacillati</taxon>
        <taxon>Bacillota</taxon>
        <taxon>Bacilli</taxon>
        <taxon>Lactobacillales</taxon>
        <taxon>Streptococcaceae</taxon>
        <taxon>Streptococcus</taxon>
    </lineage>
</organism>
<feature type="chain" id="PRO_0000260814" description="UPF0397 protein SP_0482">
    <location>
        <begin position="1"/>
        <end position="182"/>
    </location>
</feature>
<feature type="transmembrane region" description="Helical" evidence="1">
    <location>
        <begin position="10"/>
        <end position="30"/>
    </location>
</feature>
<feature type="transmembrane region" description="Helical" evidence="1">
    <location>
        <begin position="46"/>
        <end position="66"/>
    </location>
</feature>
<feature type="transmembrane region" description="Helical" evidence="1">
    <location>
        <begin position="73"/>
        <end position="93"/>
    </location>
</feature>
<feature type="transmembrane region" description="Helical" evidence="1">
    <location>
        <begin position="109"/>
        <end position="129"/>
    </location>
</feature>
<feature type="transmembrane region" description="Helical" evidence="1">
    <location>
        <begin position="148"/>
        <end position="168"/>
    </location>
</feature>
<protein>
    <recommendedName>
        <fullName evidence="1">UPF0397 protein SP_0482</fullName>
    </recommendedName>
</protein>
<dbReference type="EMBL" id="AE005672">
    <property type="protein sequence ID" value="AAK74641.1"/>
    <property type="molecule type" value="Genomic_DNA"/>
</dbReference>
<dbReference type="PIR" id="H95055">
    <property type="entry name" value="H95055"/>
</dbReference>
<dbReference type="RefSeq" id="WP_000403169.1">
    <property type="nucleotide sequence ID" value="NZ_CP155539.1"/>
</dbReference>
<dbReference type="IntAct" id="Q97SA4">
    <property type="interactions" value="1"/>
</dbReference>
<dbReference type="PaxDb" id="170187-SP_0482"/>
<dbReference type="EnsemblBacteria" id="AAK74641">
    <property type="protein sequence ID" value="AAK74641"/>
    <property type="gene ID" value="SP_0482"/>
</dbReference>
<dbReference type="KEGG" id="spn:SP_0482"/>
<dbReference type="eggNOG" id="COG4720">
    <property type="taxonomic scope" value="Bacteria"/>
</dbReference>
<dbReference type="PhylomeDB" id="Q97SA4"/>
<dbReference type="BioCyc" id="SPNE170187:G1FZB-499-MONOMER"/>
<dbReference type="Proteomes" id="UP000000585">
    <property type="component" value="Chromosome"/>
</dbReference>
<dbReference type="GO" id="GO:0005886">
    <property type="term" value="C:plasma membrane"/>
    <property type="evidence" value="ECO:0007669"/>
    <property type="project" value="UniProtKB-SubCell"/>
</dbReference>
<dbReference type="Gene3D" id="1.10.1760.20">
    <property type="match status" value="1"/>
</dbReference>
<dbReference type="HAMAP" id="MF_01572">
    <property type="entry name" value="UPF0397"/>
    <property type="match status" value="1"/>
</dbReference>
<dbReference type="InterPro" id="IPR009825">
    <property type="entry name" value="ECF_substrate-spec-like"/>
</dbReference>
<dbReference type="InterPro" id="IPR022914">
    <property type="entry name" value="UPF0397"/>
</dbReference>
<dbReference type="NCBIfam" id="NF010182">
    <property type="entry name" value="PRK13661.1"/>
    <property type="match status" value="1"/>
</dbReference>
<dbReference type="PANTHER" id="PTHR37815">
    <property type="entry name" value="UPF0397 PROTEIN BC_2624-RELATED"/>
    <property type="match status" value="1"/>
</dbReference>
<dbReference type="PANTHER" id="PTHR37815:SF3">
    <property type="entry name" value="UPF0397 PROTEIN SPR0429"/>
    <property type="match status" value="1"/>
</dbReference>
<dbReference type="Pfam" id="PF07155">
    <property type="entry name" value="ECF-ribofla_trS"/>
    <property type="match status" value="1"/>
</dbReference>
<keyword id="KW-1003">Cell membrane</keyword>
<keyword id="KW-0472">Membrane</keyword>
<keyword id="KW-1185">Reference proteome</keyword>
<keyword id="KW-0812">Transmembrane</keyword>
<keyword id="KW-1133">Transmembrane helix</keyword>
<gene>
    <name type="ordered locus">SP_0482</name>
</gene>
<proteinExistence type="evidence at protein level"/>